<gene>
    <name evidence="1" type="primary">smrB</name>
    <name type="ordered locus">SeHA_C2628</name>
</gene>
<dbReference type="EC" id="3.1.-.-" evidence="1"/>
<dbReference type="EMBL" id="CP001120">
    <property type="protein sequence ID" value="ACF67099.1"/>
    <property type="molecule type" value="Genomic_DNA"/>
</dbReference>
<dbReference type="RefSeq" id="WP_000730794.1">
    <property type="nucleotide sequence ID" value="NC_011083.1"/>
</dbReference>
<dbReference type="SMR" id="B4TCA6"/>
<dbReference type="KEGG" id="seh:SeHA_C2628"/>
<dbReference type="HOGENOM" id="CLU_055978_4_0_6"/>
<dbReference type="Proteomes" id="UP000001866">
    <property type="component" value="Chromosome"/>
</dbReference>
<dbReference type="GO" id="GO:0004521">
    <property type="term" value="F:RNA endonuclease activity"/>
    <property type="evidence" value="ECO:0007669"/>
    <property type="project" value="UniProtKB-UniRule"/>
</dbReference>
<dbReference type="GO" id="GO:0019843">
    <property type="term" value="F:rRNA binding"/>
    <property type="evidence" value="ECO:0007669"/>
    <property type="project" value="UniProtKB-UniRule"/>
</dbReference>
<dbReference type="GO" id="GO:0072344">
    <property type="term" value="P:rescue of stalled ribosome"/>
    <property type="evidence" value="ECO:0007669"/>
    <property type="project" value="UniProtKB-UniRule"/>
</dbReference>
<dbReference type="Gene3D" id="3.30.1370.110">
    <property type="match status" value="1"/>
</dbReference>
<dbReference type="HAMAP" id="MF_01042">
    <property type="entry name" value="SmrB"/>
    <property type="match status" value="1"/>
</dbReference>
<dbReference type="InterPro" id="IPR002625">
    <property type="entry name" value="Smr_dom"/>
</dbReference>
<dbReference type="InterPro" id="IPR036063">
    <property type="entry name" value="Smr_dom_sf"/>
</dbReference>
<dbReference type="InterPro" id="IPR022990">
    <property type="entry name" value="SmrB-like"/>
</dbReference>
<dbReference type="NCBIfam" id="NF003432">
    <property type="entry name" value="PRK04946.1"/>
    <property type="match status" value="1"/>
</dbReference>
<dbReference type="PANTHER" id="PTHR35562">
    <property type="entry name" value="DNA ENDONUCLEASE SMRA-RELATED"/>
    <property type="match status" value="1"/>
</dbReference>
<dbReference type="PANTHER" id="PTHR35562:SF1">
    <property type="entry name" value="UPF0115 PROTEIN YFCN"/>
    <property type="match status" value="1"/>
</dbReference>
<dbReference type="Pfam" id="PF01713">
    <property type="entry name" value="Smr"/>
    <property type="match status" value="1"/>
</dbReference>
<dbReference type="SMART" id="SM00463">
    <property type="entry name" value="SMR"/>
    <property type="match status" value="1"/>
</dbReference>
<dbReference type="SUPFAM" id="SSF160443">
    <property type="entry name" value="SMR domain-like"/>
    <property type="match status" value="1"/>
</dbReference>
<dbReference type="PROSITE" id="PS50828">
    <property type="entry name" value="SMR"/>
    <property type="match status" value="1"/>
</dbReference>
<protein>
    <recommendedName>
        <fullName evidence="1">Ribosome rescue factor SmrB</fullName>
        <ecNumber evidence="1">3.1.-.-</ecNumber>
    </recommendedName>
</protein>
<evidence type="ECO:0000255" key="1">
    <source>
        <dbReference type="HAMAP-Rule" id="MF_01042"/>
    </source>
</evidence>
<reference key="1">
    <citation type="journal article" date="2011" name="J. Bacteriol.">
        <title>Comparative genomics of 28 Salmonella enterica isolates: evidence for CRISPR-mediated adaptive sublineage evolution.</title>
        <authorList>
            <person name="Fricke W.F."/>
            <person name="Mammel M.K."/>
            <person name="McDermott P.F."/>
            <person name="Tartera C."/>
            <person name="White D.G."/>
            <person name="Leclerc J.E."/>
            <person name="Ravel J."/>
            <person name="Cebula T.A."/>
        </authorList>
    </citation>
    <scope>NUCLEOTIDE SEQUENCE [LARGE SCALE GENOMIC DNA]</scope>
    <source>
        <strain>SL476</strain>
    </source>
</reference>
<comment type="function">
    <text evidence="1">Acts as a ribosome collision sensor. Detects stalled/collided disomes (pairs of ribosomes where the leading ribosome is stalled and a second ribosome has collided with it) and endonucleolytically cleaves mRNA at the 5' boundary of the stalled ribosome. Stalled/collided disomes form a new interface (primarily via the 30S subunits) that binds SmrB. Cleaved mRNA becomes available for tmRNA ligation, leading to ribosomal subunit dissociation and rescue of stalled ribosomes.</text>
</comment>
<comment type="subunit">
    <text evidence="1">Associates with collided ribosomes, but not with correctly translating polysomes.</text>
</comment>
<comment type="similarity">
    <text evidence="1">Belongs to the SmrB family.</text>
</comment>
<keyword id="KW-0255">Endonuclease</keyword>
<keyword id="KW-0378">Hydrolase</keyword>
<keyword id="KW-0540">Nuclease</keyword>
<keyword id="KW-0694">RNA-binding</keyword>
<keyword id="KW-0699">rRNA-binding</keyword>
<sequence>MKKKTSLSEEDQALFRQLMVGTRKIKQDTIVHRPLRKKITEVPTRRLIQEQADASHYFSDEFQPLLNTEGPVKYVREDVSHFELKKMRRGDYSPELFLDLHGLTQLQAKQELGALIAACRREHIFCACVMHGHGKHILKQQTPLWLAQHPHVMAFHQAPKEYGGDAALLVLIEVEEWQPPELP</sequence>
<name>SMRB_SALHS</name>
<proteinExistence type="inferred from homology"/>
<feature type="chain" id="PRO_1000136051" description="Ribosome rescue factor SmrB">
    <location>
        <begin position="1"/>
        <end position="183"/>
    </location>
</feature>
<feature type="domain" description="Smr" evidence="1">
    <location>
        <begin position="98"/>
        <end position="173"/>
    </location>
</feature>
<organism>
    <name type="scientific">Salmonella heidelberg (strain SL476)</name>
    <dbReference type="NCBI Taxonomy" id="454169"/>
    <lineage>
        <taxon>Bacteria</taxon>
        <taxon>Pseudomonadati</taxon>
        <taxon>Pseudomonadota</taxon>
        <taxon>Gammaproteobacteria</taxon>
        <taxon>Enterobacterales</taxon>
        <taxon>Enterobacteriaceae</taxon>
        <taxon>Salmonella</taxon>
    </lineage>
</organism>
<accession>B4TCA6</accession>